<feature type="chain" id="PRO_0000282897" description="RNA-directed RNA polymerase L">
    <location>
        <begin position="1"/>
        <end position="1986"/>
    </location>
</feature>
<feature type="domain" description="RdRp catalytic" evidence="4">
    <location>
        <begin position="560"/>
        <end position="757"/>
    </location>
</feature>
<feature type="domain" description="Mononegavirus-type SAM-dependent 2'-O-MTase" evidence="5">
    <location>
        <begin position="1592"/>
        <end position="1788"/>
    </location>
</feature>
<feature type="binding site" evidence="3">
    <location>
        <begin position="1619"/>
        <end position="1628"/>
    </location>
    <ligand>
        <name>ATP</name>
        <dbReference type="ChEBI" id="CHEBI:30616"/>
    </ligand>
</feature>
<accession>Q82707</accession>
<keyword id="KW-0067">ATP-binding</keyword>
<keyword id="KW-1035">Host cytoplasm</keyword>
<keyword id="KW-0378">Hydrolase</keyword>
<keyword id="KW-0489">Methyltransferase</keyword>
<keyword id="KW-0506">mRNA capping</keyword>
<keyword id="KW-0507">mRNA processing</keyword>
<keyword id="KW-0511">Multifunctional enzyme</keyword>
<keyword id="KW-0547">Nucleotide-binding</keyword>
<keyword id="KW-0548">Nucleotidyltransferase</keyword>
<keyword id="KW-0696">RNA-directed RNA polymerase</keyword>
<keyword id="KW-0949">S-adenosyl-L-methionine</keyword>
<keyword id="KW-0808">Transferase</keyword>
<keyword id="KW-0693">Viral RNA replication</keyword>
<keyword id="KW-0946">Virion</keyword>
<organism>
    <name type="scientific">Infectious hematopoietic necrosis virus (strain Oregon69)</name>
    <name type="common">IHNV</name>
    <dbReference type="NCBI Taxonomy" id="429315"/>
    <lineage>
        <taxon>Viruses</taxon>
        <taxon>Riboviria</taxon>
        <taxon>Orthornavirae</taxon>
        <taxon>Negarnaviricota</taxon>
        <taxon>Haploviricotina</taxon>
        <taxon>Monjiviricetes</taxon>
        <taxon>Mononegavirales</taxon>
        <taxon>Rhabdoviridae</taxon>
        <taxon>Gammarhabdovirinae</taxon>
        <taxon>Novirhabdovirus</taxon>
        <taxon>Novirhabdovirus salmonid</taxon>
    </lineage>
</organism>
<protein>
    <recommendedName>
        <fullName>RNA-directed RNA polymerase L</fullName>
        <shortName>Protein L</shortName>
    </recommendedName>
    <alternativeName>
        <fullName>Large structural protein</fullName>
    </alternativeName>
    <alternativeName>
        <fullName>Replicase</fullName>
    </alternativeName>
    <alternativeName>
        <fullName>Transcriptase</fullName>
    </alternativeName>
    <domain>
        <recommendedName>
            <fullName>RNA-directed RNA polymerase</fullName>
            <ecNumber evidence="2">2.7.7.48</ecNumber>
        </recommendedName>
    </domain>
    <domain>
        <recommendedName>
            <fullName evidence="1">GTP phosphohydrolase</fullName>
            <ecNumber evidence="1">3.6.1.-</ecNumber>
        </recommendedName>
    </domain>
    <domain>
        <recommendedName>
            <fullName evidence="6">GDP polyribonucleotidyltransferase</fullName>
            <ecNumber evidence="1">2.7.7.88</ecNumber>
        </recommendedName>
        <alternativeName>
            <fullName evidence="6">PRNTase</fullName>
        </alternativeName>
    </domain>
    <domain>
        <recommendedName>
            <fullName evidence="6">mRNA cap methyltransferase</fullName>
            <ecNumber evidence="1">2.1.1.375</ecNumber>
        </recommendedName>
        <alternativeName>
            <fullName evidence="1">mRNA (guanine-N(7)-)-methyltransferase</fullName>
            <shortName evidence="1">G-N7-MTase</shortName>
        </alternativeName>
        <alternativeName>
            <fullName evidence="1">mRNA (nucleoside-2'-O-)-methyltransferase</fullName>
            <shortName evidence="1">N1-2'-O-MTase</shortName>
        </alternativeName>
    </domain>
</protein>
<proteinExistence type="inferred from homology"/>
<organismHost>
    <name type="scientific">Salmo</name>
    <dbReference type="NCBI Taxonomy" id="8028"/>
</organismHost>
<comment type="function">
    <text evidence="1">RNA-directed RNA polymerase that catalyzes the transcription of viral mRNAs, their capping and polyadenylation. The template is composed of the viral RNA tightly encapsidated by the nucleoprotein (N). The viral polymerase binds to the genomic RNA at the 3' leader promoter, and transcribes subsequently all viral mRNAs with a decreasing efficiency. The first gene is the most transcribed, and the last the least transcribed. The viral phosphoprotein acts as a processivity factor. Capping is concomitant with initiation of mRNA transcription. Indeed, a GDP polyribonucleotidyl transferase (PRNTase) adds the cap structure when the nascent RNA chain length has reached few nucleotides. Ribose 2'-O methylation of viral mRNA cap precedes and facilitates subsequent guanine-N-7 methylation, both activities being carried by the viral polymerase. Polyadenylation of mRNAs occur by a stuttering mechanism at a slipery stop site present at the end viral genes. After finishing transcription of a mRNA, the polymerase can resume transcription of the downstream gene.</text>
</comment>
<comment type="function">
    <text evidence="1">RNA-directed RNA polymerase that catalyzes the replication of viral genomic RNA. The template is composed of the viral RNA tightly encapsidated by the nucleoprotein (N). The replicase mode is dependent on intracellular N protein concentration. In this mode, the polymerase replicates the whole viral genome without recognizing transcriptional signals, and the replicated genome is not caped or polyadenylated.</text>
</comment>
<comment type="catalytic activity">
    <reaction evidence="4">
        <text>RNA(n) + a ribonucleoside 5'-triphosphate = RNA(n+1) + diphosphate</text>
        <dbReference type="Rhea" id="RHEA:21248"/>
        <dbReference type="Rhea" id="RHEA-COMP:14527"/>
        <dbReference type="Rhea" id="RHEA-COMP:17342"/>
        <dbReference type="ChEBI" id="CHEBI:33019"/>
        <dbReference type="ChEBI" id="CHEBI:61557"/>
        <dbReference type="ChEBI" id="CHEBI:140395"/>
        <dbReference type="EC" id="2.7.7.48"/>
    </reaction>
</comment>
<comment type="catalytic activity">
    <reaction evidence="1">
        <text>a 5'-end (5'-triphosphoguanosine)-adenylyl-adenylyl-cytidylyl-adenosine in mRNA + 2 S-adenosyl-L-methionine = a 5'-end (N(7)-methyl 5'-triphosphoguanosine)-(2'-O-methyladenylyl)-adenylyl-cytidylyl-adenosine in mRNA + 2 S-adenosyl-L-homocysteine + H(+)</text>
        <dbReference type="Rhea" id="RHEA:65376"/>
        <dbReference type="Rhea" id="RHEA-COMP:16797"/>
        <dbReference type="Rhea" id="RHEA-COMP:16798"/>
        <dbReference type="ChEBI" id="CHEBI:15378"/>
        <dbReference type="ChEBI" id="CHEBI:57856"/>
        <dbReference type="ChEBI" id="CHEBI:59789"/>
        <dbReference type="ChEBI" id="CHEBI:156483"/>
        <dbReference type="ChEBI" id="CHEBI:156484"/>
        <dbReference type="EC" id="2.1.1.375"/>
    </reaction>
</comment>
<comment type="catalytic activity">
    <reaction evidence="1">
        <text>a 5'-end (5'-triphosphoguanosine)-adenylyl-adenylyl-cytidylyl-adenosine in mRNA + S-adenosyl-L-methionine = a 5'-end (5'-triphosphoguanosine)-(2'-O-methyladenylyl)-adenylyl-cytidylyl-adenosine in mRNA + S-adenosyl-L-homocysteine + H(+)</text>
        <dbReference type="Rhea" id="RHEA:65380"/>
        <dbReference type="Rhea" id="RHEA-COMP:16797"/>
        <dbReference type="Rhea" id="RHEA-COMP:16801"/>
        <dbReference type="ChEBI" id="CHEBI:15378"/>
        <dbReference type="ChEBI" id="CHEBI:57856"/>
        <dbReference type="ChEBI" id="CHEBI:59789"/>
        <dbReference type="ChEBI" id="CHEBI:156482"/>
        <dbReference type="ChEBI" id="CHEBI:156484"/>
    </reaction>
</comment>
<comment type="catalytic activity">
    <reaction evidence="2">
        <text>a 5'-end triphospho-adenylyl-adenylyl-cytidylyl-adenosine in mRNA + GDP + H(+) = a 5'-end (5'-triphosphoguanosine)-adenylyl-adenylyl-cytidylyl-adenosine in mRNA + diphosphate</text>
        <dbReference type="Rhea" id="RHEA:65436"/>
        <dbReference type="Rhea" id="RHEA-COMP:16797"/>
        <dbReference type="Rhea" id="RHEA-COMP:16799"/>
        <dbReference type="ChEBI" id="CHEBI:15378"/>
        <dbReference type="ChEBI" id="CHEBI:33019"/>
        <dbReference type="ChEBI" id="CHEBI:58189"/>
        <dbReference type="ChEBI" id="CHEBI:156484"/>
        <dbReference type="ChEBI" id="CHEBI:156503"/>
        <dbReference type="EC" id="2.7.7.88"/>
    </reaction>
</comment>
<comment type="catalytic activity">
    <reaction evidence="1">
        <text>a 5'-end (5'-triphosphoguanosine)-(2'-O-methyladenylyl)-adenylyl-cytidylyl-adenosine in mRNA + S-adenosyl-L-methionine = a 5'-end (N(7)-methyl 5'-triphosphoguanosine)-(2'-O-methyladenylyl)-adenylyl-cytidylyl-adenosine in mRNA + S-adenosyl-L-homocysteine</text>
        <dbReference type="Rhea" id="RHEA:65440"/>
        <dbReference type="Rhea" id="RHEA-COMP:16798"/>
        <dbReference type="Rhea" id="RHEA-COMP:16801"/>
        <dbReference type="ChEBI" id="CHEBI:57856"/>
        <dbReference type="ChEBI" id="CHEBI:59789"/>
        <dbReference type="ChEBI" id="CHEBI:156482"/>
        <dbReference type="ChEBI" id="CHEBI:156483"/>
    </reaction>
</comment>
<comment type="catalytic activity">
    <reaction evidence="2">
        <text>GTP + H2O = GDP + phosphate + H(+)</text>
        <dbReference type="Rhea" id="RHEA:19669"/>
        <dbReference type="ChEBI" id="CHEBI:15377"/>
        <dbReference type="ChEBI" id="CHEBI:15378"/>
        <dbReference type="ChEBI" id="CHEBI:37565"/>
        <dbReference type="ChEBI" id="CHEBI:43474"/>
        <dbReference type="ChEBI" id="CHEBI:58189"/>
    </reaction>
</comment>
<comment type="subunit">
    <text evidence="1">May form homodimer. Interacts with the P protein.</text>
</comment>
<comment type="subcellular location">
    <subcellularLocation>
        <location evidence="1">Virion</location>
    </subcellularLocation>
    <subcellularLocation>
        <location evidence="1">Host cytoplasm</location>
    </subcellularLocation>
    <text evidence="1">L and P are packaged asymmetrically towards the blunt end of the virus.</text>
</comment>
<comment type="similarity">
    <text evidence="6">Belongs to the rhabdoviridae protein L family.</text>
</comment>
<evidence type="ECO:0000250" key="1">
    <source>
        <dbReference type="UniProtKB" id="P03523"/>
    </source>
</evidence>
<evidence type="ECO:0000250" key="2">
    <source>
        <dbReference type="UniProtKB" id="P28887"/>
    </source>
</evidence>
<evidence type="ECO:0000255" key="3"/>
<evidence type="ECO:0000255" key="4">
    <source>
        <dbReference type="PROSITE-ProRule" id="PRU00539"/>
    </source>
</evidence>
<evidence type="ECO:0000255" key="5">
    <source>
        <dbReference type="PROSITE-ProRule" id="PRU00923"/>
    </source>
</evidence>
<evidence type="ECO:0000305" key="6"/>
<reference key="1">
    <citation type="journal article" date="1996" name="J. Gen. Virol.">
        <title>Identification of the non-virion (NV) protein of fish rhabdoviruses viral haemorrhagic septicaemia virus and infectious haematopoietic necrosis virus.</title>
        <authorList>
            <person name="Schutze H."/>
            <person name="Enzmann P.J."/>
            <person name="Mundt E."/>
            <person name="Mettenleiter T.C."/>
        </authorList>
    </citation>
    <scope>NUCLEOTIDE SEQUENCE [GENOMIC RNA]</scope>
</reference>
<reference key="2">
    <citation type="journal article" date="1995" name="J. Gen. Virol.">
        <title>Complete genomic sequence of the fish rhabdovirus infectious haematopoietic necrosis virus.</title>
        <authorList>
            <person name="Schutze H."/>
            <person name="Enzmann P.J."/>
            <person name="Kuchling R."/>
            <person name="Mundt E."/>
            <person name="Niemann H."/>
            <person name="Mettenleiter T.C."/>
        </authorList>
    </citation>
    <scope>NUCLEOTIDE SEQUENCE [GENOMIC RNA]</scope>
</reference>
<gene>
    <name type="primary">L</name>
</gene>
<dbReference type="EC" id="2.7.7.48" evidence="2"/>
<dbReference type="EC" id="3.6.1.-" evidence="1"/>
<dbReference type="EC" id="2.7.7.88" evidence="1"/>
<dbReference type="EC" id="2.1.1.375" evidence="1"/>
<dbReference type="EMBL" id="X89213">
    <property type="protein sequence ID" value="CAA61500.1"/>
    <property type="molecule type" value="Genomic_RNA"/>
</dbReference>
<dbReference type="SMR" id="Q82707"/>
<dbReference type="Proteomes" id="UP000007211">
    <property type="component" value="Genome"/>
</dbReference>
<dbReference type="GO" id="GO:0030430">
    <property type="term" value="C:host cell cytoplasm"/>
    <property type="evidence" value="ECO:0007669"/>
    <property type="project" value="UniProtKB-SubCell"/>
</dbReference>
<dbReference type="GO" id="GO:0044423">
    <property type="term" value="C:virion component"/>
    <property type="evidence" value="ECO:0007669"/>
    <property type="project" value="UniProtKB-KW"/>
</dbReference>
<dbReference type="GO" id="GO:0005524">
    <property type="term" value="F:ATP binding"/>
    <property type="evidence" value="ECO:0007669"/>
    <property type="project" value="UniProtKB-KW"/>
</dbReference>
<dbReference type="GO" id="GO:0003924">
    <property type="term" value="F:GTPase activity"/>
    <property type="evidence" value="ECO:0007669"/>
    <property type="project" value="RHEA"/>
</dbReference>
<dbReference type="GO" id="GO:0004482">
    <property type="term" value="F:mRNA 5'-cap (guanine-N7-)-methyltransferase activity"/>
    <property type="evidence" value="ECO:0007669"/>
    <property type="project" value="InterPro"/>
</dbReference>
<dbReference type="GO" id="GO:0003968">
    <property type="term" value="F:RNA-directed RNA polymerase activity"/>
    <property type="evidence" value="ECO:0007669"/>
    <property type="project" value="UniProtKB-KW"/>
</dbReference>
<dbReference type="InterPro" id="IPR026890">
    <property type="entry name" value="Mononeg_mRNAcap"/>
</dbReference>
<dbReference type="InterPro" id="IPR014023">
    <property type="entry name" value="Mononeg_RNA_pol_cat"/>
</dbReference>
<dbReference type="InterPro" id="IPR025786">
    <property type="entry name" value="Mononega_L_MeTrfase"/>
</dbReference>
<dbReference type="Pfam" id="PF14318">
    <property type="entry name" value="Mononeg_mRNAcap"/>
    <property type="match status" value="1"/>
</dbReference>
<dbReference type="Pfam" id="PF00946">
    <property type="entry name" value="Mononeg_RNA_pol"/>
    <property type="match status" value="1"/>
</dbReference>
<dbReference type="PROSITE" id="PS50526">
    <property type="entry name" value="RDRP_SSRNA_NEG_NONSEG"/>
    <property type="match status" value="1"/>
</dbReference>
<dbReference type="PROSITE" id="PS51590">
    <property type="entry name" value="SAM_MT_MNV_L"/>
    <property type="match status" value="1"/>
</dbReference>
<sequence>MDFFDLDIEIKQERLPAECSLNSPLNYSLSAQLTDRMTPRTENVRRQRERLRSHMREHFRVKDLSTLDNDSTRLHARLTEDLITIQSPEIDSSVLENWTPLKSYYASLDYTLPEKTAFKWEHAAPYWNLFAQLRAILLQSQKIKKQETGTRELYSCGPLQIEFVEGVVLYFTDRGSKEEFTKSGELPSVTPYADFLAWIKIISQRAQAVLMAVILRVTDKGLSPLPESLLAIYQNVDDILKRAGQPAIDLLKLWEPLVITKLGELLGDRFGLEEDFRNTIRGEATKLAKNLFISRGLNRLMDILDQQTDAQPLFQFFGLFKHFAYPRVFSRDTIQAIQEVSDRPSSISAVDFLHDQCEIRKEFYVRYINAYHRAPGLDLSALSPSSFLRDSLERGKIPNERSPLYSNKEWYFVKFTKSIEWPVSDTLSTFLSDKAITRDRPAWIEDGHSGRDMSEKRLLLKFIKENFSSVADIVGAAEAIYNNQEDRLIALKVKEMELKIKGRGFGLMTFMPRLLQVLRESIAKKTQKLFPEITMTSSDLDMKKRKFMLSKKSDDRRGFIHVNKSLDINKFCTSQRQFNSNAVFSSLDELMGTFPLFSRVHEIFEKTWIVDGSSSDPPNLAHFTRILDECTALGLDTPHIWADGVFSGLKGGIEGLCQYVWTICLLLRVERVMQKTALTHYILAQGDNVIITIIVPVEIHRDGTIPEQESRRILALSRDIDLSLESELEKSGLTLKIEETLTSENISIYGKDLHCPQHLTLAIKKAASAAIISSEQYQDVPTFLSGLGTSLEALSECVNNKVGVHLFGVIMGVAGWRDLATHQTWRGWRYPYHKKAITGRIRASEMKLSKGEPTELSISVLSKRRRETETLIELLSNSLLGSALGMLAFPTPLDLEKRGVGDYITHRLTIARKALLSGHLDPRIGRKVESACNIPLSSRTDLSKLFDSPFSLNIATEEDATAVIKRQATKILRLQEIKNEKLKAQIDNMDKGIATLDAALAGATNINPRLNYMIRSITDEKESEMFVTKFASARTMRTLAMNHSSELPIVILLEMKSQQKETYTIWRTKRPPVTMWKCSTVLAKELRDTSWGKNIIGGTSPSPIEAMETIQIDPTEWEDRRSQDAMSINYYLSRAGMDEQTAKLTRGFLVPYYGTQTKPLVAKAYLELKGNPRTNKALLLLSVRESLVKTGSNLDKLIIKLCSHALDIDVASLPALRAQEEAAAGEGLRGGIKESMSPVGPDNFYTNITHKVFNRKWATPYHVNIADFIIQGLIETRRHLLVNERMNGLLPVSSVKCTSCFRKKEREFFDIPEEFTWKNESKTSDPAYTYFTTWCDLPRVSNLPEMDQRSATRLLGRGLALNRSSSGEIITKFYSMPMESQRLLHPVELLLGYGEGVIFGYLRSQHINHGALFHIGDESLAKKLRRYVLDTKTQHAKQIGYLFQDEDSLHELLGQGLCPYIPRSIPLTITELTNACAITTIRATEVILSTKARIHHMPVQAIDESDVDTSRLAANTMQTILGDPRPMNLVHLDCDLTHNMVAWESEVELDILKSENFHIDGLLVELTARELPIGDTPWKQRDWTCSNDPKIIAKGIKTKSLFIHQGVTGAINLIPDLLVVIGGGLGGCAVPYLQEWPDTPIIFATLFDERERISEDGDLIVPPELLVRGMAPRMIEREILEAELCDITNEGNRRLLIRLVTKNKGGGKVVLIDEIENRGAPESLLQSSLQDLFEKLDKVCKLTSVHTVRESTVEQFSQRVNSIKRSRKAVTLHWNRYNRRDQFEALVIVKGEEAKSDYRISTITSAKAFRKIDEQLEIDGRLSSTQWSLPALPSREKNILFGYVSSVFLKMNLALSANDMDRERLIETIEGTAPGLISWKEKLEHRDHAHRSDIEEKGITQDKIFNLICLSWVLKGLRYGVWDTDAQSIVAQTVYITRGPKLCPLGEKPKRIFASFKLQSGKRVEDAKGFLSALLHLEGFFPLGEQ</sequence>
<name>L_IHNVO</name>